<protein>
    <recommendedName>
        <fullName evidence="1">UvrABC system protein C</fullName>
        <shortName evidence="1">Protein UvrC</shortName>
    </recommendedName>
    <alternativeName>
        <fullName evidence="1">Excinuclease ABC subunit C</fullName>
    </alternativeName>
</protein>
<gene>
    <name evidence="1" type="primary">uvrC</name>
    <name type="ordered locus">SbBS512_E1040</name>
</gene>
<sequence>MSDQFDAKAFLKTVTSQPGVYRMYDAGGTVIYVGKAKDLKKRLSSYFRSNLASRKTEALVAQIQQIDVTVTHTETEALLLEHNYIKLYQPRYNVLLRDDKSYPFIFLSGDTHPRLAMHRGAKHAKGEYFGPFPNGYAVRETLALLQKIFPIRQCENSVYRNRSRPCLQYQIGRCLGPCVEGLVSEEEYAQQVEYVRLFLSGKDDQVLTQLISRMETASQNLEFEEAARIRDQIQAVRRVTEKQFVSNTGNDLDVIGVAFDAGMACVHVLFIRQGKVLGSRSYFPKVPGGTELSEVVETFVGQFYLQGSQMRTLPGEILLDFNLSDKTLLADSLSELAGRKINVQTKPRGDRARYLKLARTNAATALISKLSQQSTVHQRLTALASVLKLPEVKRMECFDISHTMGEQTVASCVVFDANGPLRAEYRRYNITGITPGDDYAAMNQVLRRRYGKAIDDSKIPDVILIDGGKGQLAQAKNVFAELDVSWDKNHPLLLGVAKGADRKAGLETLFFEPEGEGFSLPPDSPALHVIQHIRDESHDHAIGGHRKKRAKVKNTSSLETIEGVGPKRRQMLLKYMGGLQGLRNASVEEIAKVPGISQGLAEKIFWSLKH</sequence>
<comment type="function">
    <text evidence="1">The UvrABC repair system catalyzes the recognition and processing of DNA lesions. UvrC both incises the 5' and 3' sides of the lesion. The N-terminal half is responsible for the 3' incision and the C-terminal half is responsible for the 5' incision.</text>
</comment>
<comment type="subunit">
    <text evidence="1">Interacts with UvrB in an incision complex.</text>
</comment>
<comment type="subcellular location">
    <subcellularLocation>
        <location evidence="1">Cytoplasm</location>
    </subcellularLocation>
</comment>
<comment type="similarity">
    <text evidence="1">Belongs to the UvrC family.</text>
</comment>
<reference key="1">
    <citation type="submission" date="2008-05" db="EMBL/GenBank/DDBJ databases">
        <title>Complete sequence of Shigella boydii serotype 18 strain BS512.</title>
        <authorList>
            <person name="Rasko D.A."/>
            <person name="Rosovitz M."/>
            <person name="Maurelli A.T."/>
            <person name="Myers G."/>
            <person name="Seshadri R."/>
            <person name="Cer R."/>
            <person name="Jiang L."/>
            <person name="Ravel J."/>
            <person name="Sebastian Y."/>
        </authorList>
    </citation>
    <scope>NUCLEOTIDE SEQUENCE [LARGE SCALE GENOMIC DNA]</scope>
    <source>
        <strain>CDC 3083-94 / BS512</strain>
    </source>
</reference>
<keyword id="KW-0963">Cytoplasm</keyword>
<keyword id="KW-0227">DNA damage</keyword>
<keyword id="KW-0228">DNA excision</keyword>
<keyword id="KW-0234">DNA repair</keyword>
<keyword id="KW-0267">Excision nuclease</keyword>
<keyword id="KW-1185">Reference proteome</keyword>
<keyword id="KW-0742">SOS response</keyword>
<feature type="chain" id="PRO_1000099519" description="UvrABC system protein C">
    <location>
        <begin position="1"/>
        <end position="610"/>
    </location>
</feature>
<feature type="domain" description="GIY-YIG" evidence="1">
    <location>
        <begin position="16"/>
        <end position="94"/>
    </location>
</feature>
<feature type="domain" description="UVR" evidence="1">
    <location>
        <begin position="204"/>
        <end position="239"/>
    </location>
</feature>
<evidence type="ECO:0000255" key="1">
    <source>
        <dbReference type="HAMAP-Rule" id="MF_00203"/>
    </source>
</evidence>
<accession>B2TXF7</accession>
<name>UVRC_SHIB3</name>
<organism>
    <name type="scientific">Shigella boydii serotype 18 (strain CDC 3083-94 / BS512)</name>
    <dbReference type="NCBI Taxonomy" id="344609"/>
    <lineage>
        <taxon>Bacteria</taxon>
        <taxon>Pseudomonadati</taxon>
        <taxon>Pseudomonadota</taxon>
        <taxon>Gammaproteobacteria</taxon>
        <taxon>Enterobacterales</taxon>
        <taxon>Enterobacteriaceae</taxon>
        <taxon>Shigella</taxon>
    </lineage>
</organism>
<proteinExistence type="inferred from homology"/>
<dbReference type="EMBL" id="CP001063">
    <property type="protein sequence ID" value="ACD07190.1"/>
    <property type="molecule type" value="Genomic_DNA"/>
</dbReference>
<dbReference type="RefSeq" id="WP_001283435.1">
    <property type="nucleotide sequence ID" value="NC_010658.1"/>
</dbReference>
<dbReference type="SMR" id="B2TXF7"/>
<dbReference type="STRING" id="344609.SbBS512_E1040"/>
<dbReference type="KEGG" id="sbc:SbBS512_E1040"/>
<dbReference type="HOGENOM" id="CLU_014841_3_0_6"/>
<dbReference type="Proteomes" id="UP000001030">
    <property type="component" value="Chromosome"/>
</dbReference>
<dbReference type="GO" id="GO:0005737">
    <property type="term" value="C:cytoplasm"/>
    <property type="evidence" value="ECO:0007669"/>
    <property type="project" value="UniProtKB-SubCell"/>
</dbReference>
<dbReference type="GO" id="GO:0009380">
    <property type="term" value="C:excinuclease repair complex"/>
    <property type="evidence" value="ECO:0007669"/>
    <property type="project" value="InterPro"/>
</dbReference>
<dbReference type="GO" id="GO:0003677">
    <property type="term" value="F:DNA binding"/>
    <property type="evidence" value="ECO:0007669"/>
    <property type="project" value="UniProtKB-UniRule"/>
</dbReference>
<dbReference type="GO" id="GO:0009381">
    <property type="term" value="F:excinuclease ABC activity"/>
    <property type="evidence" value="ECO:0007669"/>
    <property type="project" value="UniProtKB-UniRule"/>
</dbReference>
<dbReference type="GO" id="GO:0006289">
    <property type="term" value="P:nucleotide-excision repair"/>
    <property type="evidence" value="ECO:0007669"/>
    <property type="project" value="UniProtKB-UniRule"/>
</dbReference>
<dbReference type="GO" id="GO:0009432">
    <property type="term" value="P:SOS response"/>
    <property type="evidence" value="ECO:0007669"/>
    <property type="project" value="UniProtKB-UniRule"/>
</dbReference>
<dbReference type="CDD" id="cd10434">
    <property type="entry name" value="GIY-YIG_UvrC_Cho"/>
    <property type="match status" value="1"/>
</dbReference>
<dbReference type="FunFam" id="1.10.150.20:FF:000005">
    <property type="entry name" value="UvrABC system protein C"/>
    <property type="match status" value="1"/>
</dbReference>
<dbReference type="FunFam" id="3.30.420.340:FF:000001">
    <property type="entry name" value="UvrABC system protein C"/>
    <property type="match status" value="1"/>
</dbReference>
<dbReference type="FunFam" id="3.40.1440.10:FF:000001">
    <property type="entry name" value="UvrABC system protein C"/>
    <property type="match status" value="1"/>
</dbReference>
<dbReference type="FunFam" id="4.10.860.10:FF:000002">
    <property type="entry name" value="UvrABC system protein C"/>
    <property type="match status" value="1"/>
</dbReference>
<dbReference type="Gene3D" id="1.10.150.20">
    <property type="entry name" value="5' to 3' exonuclease, C-terminal subdomain"/>
    <property type="match status" value="1"/>
</dbReference>
<dbReference type="Gene3D" id="3.40.1440.10">
    <property type="entry name" value="GIY-YIG endonuclease"/>
    <property type="match status" value="1"/>
</dbReference>
<dbReference type="Gene3D" id="4.10.860.10">
    <property type="entry name" value="UVR domain"/>
    <property type="match status" value="1"/>
</dbReference>
<dbReference type="Gene3D" id="3.30.420.340">
    <property type="entry name" value="UvrC, RNAse H endonuclease domain"/>
    <property type="match status" value="1"/>
</dbReference>
<dbReference type="HAMAP" id="MF_00203">
    <property type="entry name" value="UvrC"/>
    <property type="match status" value="1"/>
</dbReference>
<dbReference type="InterPro" id="IPR000305">
    <property type="entry name" value="GIY-YIG_endonuc"/>
</dbReference>
<dbReference type="InterPro" id="IPR035901">
    <property type="entry name" value="GIY-YIG_endonuc_sf"/>
</dbReference>
<dbReference type="InterPro" id="IPR047296">
    <property type="entry name" value="GIY-YIG_UvrC_Cho"/>
</dbReference>
<dbReference type="InterPro" id="IPR003583">
    <property type="entry name" value="Hlx-hairpin-Hlx_DNA-bd_motif"/>
</dbReference>
<dbReference type="InterPro" id="IPR010994">
    <property type="entry name" value="RuvA_2-like"/>
</dbReference>
<dbReference type="InterPro" id="IPR001943">
    <property type="entry name" value="UVR_dom"/>
</dbReference>
<dbReference type="InterPro" id="IPR036876">
    <property type="entry name" value="UVR_dom_sf"/>
</dbReference>
<dbReference type="InterPro" id="IPR050066">
    <property type="entry name" value="UvrABC_protein_C"/>
</dbReference>
<dbReference type="InterPro" id="IPR004791">
    <property type="entry name" value="UvrC"/>
</dbReference>
<dbReference type="InterPro" id="IPR001162">
    <property type="entry name" value="UvrC_RNase_H_dom"/>
</dbReference>
<dbReference type="InterPro" id="IPR038476">
    <property type="entry name" value="UvrC_RNase_H_dom_sf"/>
</dbReference>
<dbReference type="NCBIfam" id="NF001824">
    <property type="entry name" value="PRK00558.1-5"/>
    <property type="match status" value="1"/>
</dbReference>
<dbReference type="NCBIfam" id="TIGR00194">
    <property type="entry name" value="uvrC"/>
    <property type="match status" value="1"/>
</dbReference>
<dbReference type="PANTHER" id="PTHR30562:SF1">
    <property type="entry name" value="UVRABC SYSTEM PROTEIN C"/>
    <property type="match status" value="1"/>
</dbReference>
<dbReference type="PANTHER" id="PTHR30562">
    <property type="entry name" value="UVRC/OXIDOREDUCTASE"/>
    <property type="match status" value="1"/>
</dbReference>
<dbReference type="Pfam" id="PF01541">
    <property type="entry name" value="GIY-YIG"/>
    <property type="match status" value="1"/>
</dbReference>
<dbReference type="Pfam" id="PF14520">
    <property type="entry name" value="HHH_5"/>
    <property type="match status" value="1"/>
</dbReference>
<dbReference type="Pfam" id="PF02151">
    <property type="entry name" value="UVR"/>
    <property type="match status" value="1"/>
</dbReference>
<dbReference type="Pfam" id="PF22920">
    <property type="entry name" value="UvrC_RNaseH"/>
    <property type="match status" value="1"/>
</dbReference>
<dbReference type="Pfam" id="PF08459">
    <property type="entry name" value="UvrC_RNaseH_dom"/>
    <property type="match status" value="1"/>
</dbReference>
<dbReference type="SMART" id="SM00465">
    <property type="entry name" value="GIYc"/>
    <property type="match status" value="1"/>
</dbReference>
<dbReference type="SMART" id="SM00278">
    <property type="entry name" value="HhH1"/>
    <property type="match status" value="2"/>
</dbReference>
<dbReference type="SUPFAM" id="SSF46600">
    <property type="entry name" value="C-terminal UvrC-binding domain of UvrB"/>
    <property type="match status" value="1"/>
</dbReference>
<dbReference type="SUPFAM" id="SSF82771">
    <property type="entry name" value="GIY-YIG endonuclease"/>
    <property type="match status" value="1"/>
</dbReference>
<dbReference type="SUPFAM" id="SSF47781">
    <property type="entry name" value="RuvA domain 2-like"/>
    <property type="match status" value="1"/>
</dbReference>
<dbReference type="PROSITE" id="PS50164">
    <property type="entry name" value="GIY_YIG"/>
    <property type="match status" value="1"/>
</dbReference>
<dbReference type="PROSITE" id="PS50151">
    <property type="entry name" value="UVR"/>
    <property type="match status" value="1"/>
</dbReference>
<dbReference type="PROSITE" id="PS50165">
    <property type="entry name" value="UVRC"/>
    <property type="match status" value="1"/>
</dbReference>